<dbReference type="EMBL" id="CP001344">
    <property type="protein sequence ID" value="ACL47314.1"/>
    <property type="molecule type" value="Genomic_DNA"/>
</dbReference>
<dbReference type="SMR" id="B8HP54"/>
<dbReference type="STRING" id="395961.Cyan7425_5017"/>
<dbReference type="KEGG" id="cyn:Cyan7425_5017"/>
<dbReference type="eggNOG" id="COG0355">
    <property type="taxonomic scope" value="Bacteria"/>
</dbReference>
<dbReference type="HOGENOM" id="CLU_084338_1_2_3"/>
<dbReference type="OrthoDB" id="9804110at2"/>
<dbReference type="GO" id="GO:0031676">
    <property type="term" value="C:plasma membrane-derived thylakoid membrane"/>
    <property type="evidence" value="ECO:0007669"/>
    <property type="project" value="UniProtKB-SubCell"/>
</dbReference>
<dbReference type="GO" id="GO:0045259">
    <property type="term" value="C:proton-transporting ATP synthase complex"/>
    <property type="evidence" value="ECO:0007669"/>
    <property type="project" value="UniProtKB-KW"/>
</dbReference>
<dbReference type="GO" id="GO:0005524">
    <property type="term" value="F:ATP binding"/>
    <property type="evidence" value="ECO:0007669"/>
    <property type="project" value="UniProtKB-UniRule"/>
</dbReference>
<dbReference type="GO" id="GO:0046933">
    <property type="term" value="F:proton-transporting ATP synthase activity, rotational mechanism"/>
    <property type="evidence" value="ECO:0007669"/>
    <property type="project" value="UniProtKB-UniRule"/>
</dbReference>
<dbReference type="CDD" id="cd12152">
    <property type="entry name" value="F1-ATPase_delta"/>
    <property type="match status" value="1"/>
</dbReference>
<dbReference type="Gene3D" id="2.60.15.10">
    <property type="entry name" value="F0F1 ATP synthase delta/epsilon subunit, N-terminal"/>
    <property type="match status" value="1"/>
</dbReference>
<dbReference type="Gene3D" id="1.10.287.540">
    <property type="entry name" value="Helix hairpin bin"/>
    <property type="match status" value="1"/>
</dbReference>
<dbReference type="HAMAP" id="MF_00530">
    <property type="entry name" value="ATP_synth_epsil_bac"/>
    <property type="match status" value="1"/>
</dbReference>
<dbReference type="InterPro" id="IPR001469">
    <property type="entry name" value="ATP_synth_F1_dsu/esu"/>
</dbReference>
<dbReference type="InterPro" id="IPR020546">
    <property type="entry name" value="ATP_synth_F1_dsu/esu_N"/>
</dbReference>
<dbReference type="InterPro" id="IPR020547">
    <property type="entry name" value="ATP_synth_F1_esu_C"/>
</dbReference>
<dbReference type="InterPro" id="IPR036771">
    <property type="entry name" value="ATPsynth_dsu/esu_N"/>
</dbReference>
<dbReference type="NCBIfam" id="TIGR01216">
    <property type="entry name" value="ATP_synt_epsi"/>
    <property type="match status" value="1"/>
</dbReference>
<dbReference type="PANTHER" id="PTHR13822">
    <property type="entry name" value="ATP SYNTHASE DELTA/EPSILON CHAIN"/>
    <property type="match status" value="1"/>
</dbReference>
<dbReference type="PANTHER" id="PTHR13822:SF10">
    <property type="entry name" value="ATP SYNTHASE EPSILON CHAIN, CHLOROPLASTIC"/>
    <property type="match status" value="1"/>
</dbReference>
<dbReference type="Pfam" id="PF00401">
    <property type="entry name" value="ATP-synt_DE"/>
    <property type="match status" value="1"/>
</dbReference>
<dbReference type="Pfam" id="PF02823">
    <property type="entry name" value="ATP-synt_DE_N"/>
    <property type="match status" value="1"/>
</dbReference>
<dbReference type="SUPFAM" id="SSF51344">
    <property type="entry name" value="Epsilon subunit of F1F0-ATP synthase N-terminal domain"/>
    <property type="match status" value="1"/>
</dbReference>
<evidence type="ECO:0000255" key="1">
    <source>
        <dbReference type="HAMAP-Rule" id="MF_00530"/>
    </source>
</evidence>
<reference key="1">
    <citation type="journal article" date="2011" name="MBio">
        <title>Novel metabolic attributes of the genus Cyanothece, comprising a group of unicellular nitrogen-fixing Cyanobacteria.</title>
        <authorList>
            <person name="Bandyopadhyay A."/>
            <person name="Elvitigala T."/>
            <person name="Welsh E."/>
            <person name="Stockel J."/>
            <person name="Liberton M."/>
            <person name="Min H."/>
            <person name="Sherman L.A."/>
            <person name="Pakrasi H.B."/>
        </authorList>
    </citation>
    <scope>NUCLEOTIDE SEQUENCE [LARGE SCALE GENOMIC DNA]</scope>
    <source>
        <strain>PCC 7425 / ATCC 29141</strain>
    </source>
</reference>
<accession>B8HP54</accession>
<name>ATPE_CYAP4</name>
<sequence>MTLTVRVIAPDKTVWDSPAEEVILPSTTGQLGILSGHAPLLTALETGVMRVRSGKEWLPIALMGGFAEVENNEVTILVNAAERGDRIDRAQAEASYAAAQTKLSQAEQSDSRQAKIQAVQELKRARARVQAAGGVVEI</sequence>
<protein>
    <recommendedName>
        <fullName evidence="1">ATP synthase epsilon chain</fullName>
    </recommendedName>
    <alternativeName>
        <fullName evidence="1">ATP synthase F1 sector epsilon subunit</fullName>
    </alternativeName>
    <alternativeName>
        <fullName evidence="1">F-ATPase epsilon subunit</fullName>
    </alternativeName>
</protein>
<organism>
    <name type="scientific">Cyanothece sp. (strain PCC 7425 / ATCC 29141)</name>
    <dbReference type="NCBI Taxonomy" id="395961"/>
    <lineage>
        <taxon>Bacteria</taxon>
        <taxon>Bacillati</taxon>
        <taxon>Cyanobacteriota</taxon>
        <taxon>Cyanophyceae</taxon>
        <taxon>Gomontiellales</taxon>
        <taxon>Cyanothecaceae</taxon>
        <taxon>Cyanothece</taxon>
    </lineage>
</organism>
<proteinExistence type="inferred from homology"/>
<gene>
    <name evidence="1" type="primary">atpC</name>
    <name type="ordered locus">Cyan7425_5017</name>
</gene>
<feature type="chain" id="PRO_1000146323" description="ATP synthase epsilon chain">
    <location>
        <begin position="1"/>
        <end position="138"/>
    </location>
</feature>
<comment type="function">
    <text evidence="1">Produces ATP from ADP in the presence of a proton gradient across the membrane.</text>
</comment>
<comment type="subunit">
    <text evidence="1">F-type ATPases have 2 components, CF(1) - the catalytic core - and CF(0) - the membrane proton channel. CF(1) has five subunits: alpha(3), beta(3), gamma(1), delta(1), epsilon(1). CF(0) has three main subunits: a, b and c.</text>
</comment>
<comment type="subcellular location">
    <subcellularLocation>
        <location evidence="1">Cellular thylakoid membrane</location>
        <topology evidence="1">Peripheral membrane protein</topology>
    </subcellularLocation>
</comment>
<comment type="similarity">
    <text evidence="1">Belongs to the ATPase epsilon chain family.</text>
</comment>
<keyword id="KW-0066">ATP synthesis</keyword>
<keyword id="KW-0139">CF(1)</keyword>
<keyword id="KW-0375">Hydrogen ion transport</keyword>
<keyword id="KW-0406">Ion transport</keyword>
<keyword id="KW-0472">Membrane</keyword>
<keyword id="KW-0793">Thylakoid</keyword>
<keyword id="KW-0813">Transport</keyword>